<reference key="1">
    <citation type="journal article" date="2008" name="J. Biotechnol.">
        <title>The lifestyle of Corynebacterium urealyticum derived from its complete genome sequence established by pyrosequencing.</title>
        <authorList>
            <person name="Tauch A."/>
            <person name="Trost E."/>
            <person name="Tilker A."/>
            <person name="Ludewig U."/>
            <person name="Schneiker S."/>
            <person name="Goesmann A."/>
            <person name="Arnold W."/>
            <person name="Bekel T."/>
            <person name="Brinkrolf K."/>
            <person name="Brune I."/>
            <person name="Goetker S."/>
            <person name="Kalinowski J."/>
            <person name="Kamp P.-B."/>
            <person name="Lobo F.P."/>
            <person name="Viehoever P."/>
            <person name="Weisshaar B."/>
            <person name="Soriano F."/>
            <person name="Droege M."/>
            <person name="Puehler A."/>
        </authorList>
    </citation>
    <scope>NUCLEOTIDE SEQUENCE [LARGE SCALE GENOMIC DNA]</scope>
    <source>
        <strain>ATCC 43042 / DSM 7109</strain>
    </source>
</reference>
<protein>
    <recommendedName>
        <fullName evidence="1">Imidazoleglycerol-phosphate dehydratase</fullName>
        <shortName evidence="1">IGPD</shortName>
        <ecNumber evidence="1">4.2.1.19</ecNumber>
    </recommendedName>
</protein>
<sequence>MSNTFEDRIGRAQRKTSESDISVSINLDGSGKTDISTGLPFFDHMLTALGAHGSFDLEVKAVGDVEIDAHHTVEDTGIVLGQALGEALGTKAGIRRFGDAFIPMDECLAHAAVDVSGRPYYVGTGEPDAMVHTVIGGHYATVINQHFFETLALNARIALHVRCLYGRDPHHITEAEYKAVARALRAAVERDERVTGIPSTKGAL</sequence>
<feature type="chain" id="PRO_1000092686" description="Imidazoleglycerol-phosphate dehydratase">
    <location>
        <begin position="1"/>
        <end position="204"/>
    </location>
</feature>
<proteinExistence type="inferred from homology"/>
<dbReference type="EC" id="4.2.1.19" evidence="1"/>
<dbReference type="EMBL" id="AM942444">
    <property type="protein sequence ID" value="CAQ05134.1"/>
    <property type="molecule type" value="Genomic_DNA"/>
</dbReference>
<dbReference type="RefSeq" id="WP_012360422.1">
    <property type="nucleotide sequence ID" value="NC_010545.1"/>
</dbReference>
<dbReference type="SMR" id="B1VH93"/>
<dbReference type="STRING" id="504474.cu1174"/>
<dbReference type="GeneID" id="60603956"/>
<dbReference type="KEGG" id="cur:cu1174"/>
<dbReference type="eggNOG" id="COG0131">
    <property type="taxonomic scope" value="Bacteria"/>
</dbReference>
<dbReference type="HOGENOM" id="CLU_044308_3_0_11"/>
<dbReference type="UniPathway" id="UPA00031">
    <property type="reaction ID" value="UER00011"/>
</dbReference>
<dbReference type="Proteomes" id="UP000001727">
    <property type="component" value="Chromosome"/>
</dbReference>
<dbReference type="GO" id="GO:0005737">
    <property type="term" value="C:cytoplasm"/>
    <property type="evidence" value="ECO:0007669"/>
    <property type="project" value="UniProtKB-SubCell"/>
</dbReference>
<dbReference type="GO" id="GO:0004424">
    <property type="term" value="F:imidazoleglycerol-phosphate dehydratase activity"/>
    <property type="evidence" value="ECO:0007669"/>
    <property type="project" value="UniProtKB-UniRule"/>
</dbReference>
<dbReference type="GO" id="GO:0000105">
    <property type="term" value="P:L-histidine biosynthetic process"/>
    <property type="evidence" value="ECO:0007669"/>
    <property type="project" value="UniProtKB-UniRule"/>
</dbReference>
<dbReference type="CDD" id="cd07914">
    <property type="entry name" value="IGPD"/>
    <property type="match status" value="1"/>
</dbReference>
<dbReference type="FunFam" id="3.30.230.40:FF:000001">
    <property type="entry name" value="Imidazoleglycerol-phosphate dehydratase HisB"/>
    <property type="match status" value="1"/>
</dbReference>
<dbReference type="FunFam" id="3.30.230.40:FF:000003">
    <property type="entry name" value="Imidazoleglycerol-phosphate dehydratase HisB"/>
    <property type="match status" value="1"/>
</dbReference>
<dbReference type="Gene3D" id="3.30.230.40">
    <property type="entry name" value="Imidazole glycerol phosphate dehydratase, domain 1"/>
    <property type="match status" value="2"/>
</dbReference>
<dbReference type="HAMAP" id="MF_00076">
    <property type="entry name" value="HisB"/>
    <property type="match status" value="1"/>
</dbReference>
<dbReference type="InterPro" id="IPR038494">
    <property type="entry name" value="IGPD_sf"/>
</dbReference>
<dbReference type="InterPro" id="IPR000807">
    <property type="entry name" value="ImidazoleglycerolP_deHydtase"/>
</dbReference>
<dbReference type="InterPro" id="IPR020565">
    <property type="entry name" value="ImidazoleglycerP_deHydtase_CS"/>
</dbReference>
<dbReference type="InterPro" id="IPR020568">
    <property type="entry name" value="Ribosomal_Su5_D2-typ_SF"/>
</dbReference>
<dbReference type="NCBIfam" id="NF002110">
    <property type="entry name" value="PRK00951.1-6"/>
    <property type="match status" value="1"/>
</dbReference>
<dbReference type="NCBIfam" id="NF002111">
    <property type="entry name" value="PRK00951.2-1"/>
    <property type="match status" value="1"/>
</dbReference>
<dbReference type="NCBIfam" id="NF002114">
    <property type="entry name" value="PRK00951.2-4"/>
    <property type="match status" value="1"/>
</dbReference>
<dbReference type="PANTHER" id="PTHR23133:SF2">
    <property type="entry name" value="IMIDAZOLEGLYCEROL-PHOSPHATE DEHYDRATASE"/>
    <property type="match status" value="1"/>
</dbReference>
<dbReference type="PANTHER" id="PTHR23133">
    <property type="entry name" value="IMIDAZOLEGLYCEROL-PHOSPHATE DEHYDRATASE HIS7"/>
    <property type="match status" value="1"/>
</dbReference>
<dbReference type="Pfam" id="PF00475">
    <property type="entry name" value="IGPD"/>
    <property type="match status" value="1"/>
</dbReference>
<dbReference type="SUPFAM" id="SSF54211">
    <property type="entry name" value="Ribosomal protein S5 domain 2-like"/>
    <property type="match status" value="2"/>
</dbReference>
<dbReference type="PROSITE" id="PS00954">
    <property type="entry name" value="IGP_DEHYDRATASE_1"/>
    <property type="match status" value="1"/>
</dbReference>
<dbReference type="PROSITE" id="PS00955">
    <property type="entry name" value="IGP_DEHYDRATASE_2"/>
    <property type="match status" value="1"/>
</dbReference>
<organism>
    <name type="scientific">Corynebacterium urealyticum (strain ATCC 43042 / DSM 7109)</name>
    <dbReference type="NCBI Taxonomy" id="504474"/>
    <lineage>
        <taxon>Bacteria</taxon>
        <taxon>Bacillati</taxon>
        <taxon>Actinomycetota</taxon>
        <taxon>Actinomycetes</taxon>
        <taxon>Mycobacteriales</taxon>
        <taxon>Corynebacteriaceae</taxon>
        <taxon>Corynebacterium</taxon>
    </lineage>
</organism>
<accession>B1VH93</accession>
<gene>
    <name evidence="1" type="primary">hisB</name>
    <name type="ordered locus">cu1174</name>
</gene>
<name>HIS7_CORU7</name>
<comment type="catalytic activity">
    <reaction evidence="1">
        <text>D-erythro-1-(imidazol-4-yl)glycerol 3-phosphate = 3-(imidazol-4-yl)-2-oxopropyl phosphate + H2O</text>
        <dbReference type="Rhea" id="RHEA:11040"/>
        <dbReference type="ChEBI" id="CHEBI:15377"/>
        <dbReference type="ChEBI" id="CHEBI:57766"/>
        <dbReference type="ChEBI" id="CHEBI:58278"/>
        <dbReference type="EC" id="4.2.1.19"/>
    </reaction>
</comment>
<comment type="pathway">
    <text evidence="1">Amino-acid biosynthesis; L-histidine biosynthesis; L-histidine from 5-phospho-alpha-D-ribose 1-diphosphate: step 6/9.</text>
</comment>
<comment type="subcellular location">
    <subcellularLocation>
        <location evidence="1">Cytoplasm</location>
    </subcellularLocation>
</comment>
<comment type="similarity">
    <text evidence="1">Belongs to the imidazoleglycerol-phosphate dehydratase family.</text>
</comment>
<evidence type="ECO:0000255" key="1">
    <source>
        <dbReference type="HAMAP-Rule" id="MF_00076"/>
    </source>
</evidence>
<keyword id="KW-0028">Amino-acid biosynthesis</keyword>
<keyword id="KW-0963">Cytoplasm</keyword>
<keyword id="KW-0368">Histidine biosynthesis</keyword>
<keyword id="KW-0456">Lyase</keyword>
<keyword id="KW-1185">Reference proteome</keyword>